<gene>
    <name evidence="1" type="primary">aroD</name>
    <name type="ordered locus">STER_0688</name>
</gene>
<proteinExistence type="inferred from homology"/>
<organism>
    <name type="scientific">Streptococcus thermophilus (strain ATCC BAA-491 / LMD-9)</name>
    <dbReference type="NCBI Taxonomy" id="322159"/>
    <lineage>
        <taxon>Bacteria</taxon>
        <taxon>Bacillati</taxon>
        <taxon>Bacillota</taxon>
        <taxon>Bacilli</taxon>
        <taxon>Lactobacillales</taxon>
        <taxon>Streptococcaceae</taxon>
        <taxon>Streptococcus</taxon>
    </lineage>
</organism>
<sequence>MKIVVPIMPTSLEEAQALELSRFEGADIIEWRADFLDKHSILTVAPAIFEKFAGFEIVFTIRTTREGGKIELTDGEYVTLIKDVAAIYSPDYIDFEYFTRKEVFDQMLEFSNLVLSYHNFEETPENLMELLSEMTNLTPRVVKVAVMPKNEQDVLDLMNFTRGFKAFNPEQEFVTMSMGKLGRLSRLAGDLVGSSWTFASLDNTSAPGQVALADMCRIREVLDAD</sequence>
<comment type="function">
    <text evidence="1">Involved in the third step of the chorismate pathway, which leads to the biosynthesis of aromatic amino acids. Catalyzes the cis-dehydration of 3-dehydroquinate (DHQ) and introduces the first double bond of the aromatic ring to yield 3-dehydroshikimate.</text>
</comment>
<comment type="catalytic activity">
    <reaction evidence="1">
        <text>3-dehydroquinate = 3-dehydroshikimate + H2O</text>
        <dbReference type="Rhea" id="RHEA:21096"/>
        <dbReference type="ChEBI" id="CHEBI:15377"/>
        <dbReference type="ChEBI" id="CHEBI:16630"/>
        <dbReference type="ChEBI" id="CHEBI:32364"/>
        <dbReference type="EC" id="4.2.1.10"/>
    </reaction>
</comment>
<comment type="pathway">
    <text evidence="1">Metabolic intermediate biosynthesis; chorismate biosynthesis; chorismate from D-erythrose 4-phosphate and phosphoenolpyruvate: step 3/7.</text>
</comment>
<comment type="subunit">
    <text evidence="1">Homodimer.</text>
</comment>
<comment type="similarity">
    <text evidence="1">Belongs to the type-I 3-dehydroquinase family.</text>
</comment>
<accession>Q03LH6</accession>
<feature type="chain" id="PRO_1000043207" description="3-dehydroquinate dehydratase">
    <location>
        <begin position="1"/>
        <end position="225"/>
    </location>
</feature>
<feature type="active site" description="Proton donor/acceptor" evidence="1">
    <location>
        <position position="118"/>
    </location>
</feature>
<feature type="active site" description="Schiff-base intermediate with substrate" evidence="1">
    <location>
        <position position="143"/>
    </location>
</feature>
<feature type="binding site" evidence="1">
    <location>
        <begin position="30"/>
        <end position="32"/>
    </location>
    <ligand>
        <name>3-dehydroquinate</name>
        <dbReference type="ChEBI" id="CHEBI:32364"/>
    </ligand>
</feature>
<feature type="binding site" evidence="1">
    <location>
        <position position="62"/>
    </location>
    <ligand>
        <name>3-dehydroquinate</name>
        <dbReference type="ChEBI" id="CHEBI:32364"/>
    </ligand>
</feature>
<feature type="binding site" evidence="1">
    <location>
        <position position="186"/>
    </location>
    <ligand>
        <name>3-dehydroquinate</name>
        <dbReference type="ChEBI" id="CHEBI:32364"/>
    </ligand>
</feature>
<feature type="binding site" evidence="1">
    <location>
        <position position="205"/>
    </location>
    <ligand>
        <name>3-dehydroquinate</name>
        <dbReference type="ChEBI" id="CHEBI:32364"/>
    </ligand>
</feature>
<feature type="binding site" evidence="1">
    <location>
        <position position="209"/>
    </location>
    <ligand>
        <name>3-dehydroquinate</name>
        <dbReference type="ChEBI" id="CHEBI:32364"/>
    </ligand>
</feature>
<dbReference type="EC" id="4.2.1.10" evidence="1"/>
<dbReference type="EMBL" id="CP000419">
    <property type="protein sequence ID" value="ABJ65946.1"/>
    <property type="molecule type" value="Genomic_DNA"/>
</dbReference>
<dbReference type="RefSeq" id="WP_002947238.1">
    <property type="nucleotide sequence ID" value="NZ_CP086001.1"/>
</dbReference>
<dbReference type="SMR" id="Q03LH6"/>
<dbReference type="KEGG" id="ste:STER_0688"/>
<dbReference type="HOGENOM" id="CLU_064444_0_0_9"/>
<dbReference type="UniPathway" id="UPA00053">
    <property type="reaction ID" value="UER00086"/>
</dbReference>
<dbReference type="GO" id="GO:0003855">
    <property type="term" value="F:3-dehydroquinate dehydratase activity"/>
    <property type="evidence" value="ECO:0007669"/>
    <property type="project" value="UniProtKB-UniRule"/>
</dbReference>
<dbReference type="GO" id="GO:0046279">
    <property type="term" value="P:3,4-dihydroxybenzoate biosynthetic process"/>
    <property type="evidence" value="ECO:0007669"/>
    <property type="project" value="UniProtKB-ARBA"/>
</dbReference>
<dbReference type="GO" id="GO:0008652">
    <property type="term" value="P:amino acid biosynthetic process"/>
    <property type="evidence" value="ECO:0007669"/>
    <property type="project" value="UniProtKB-KW"/>
</dbReference>
<dbReference type="GO" id="GO:0009073">
    <property type="term" value="P:aromatic amino acid family biosynthetic process"/>
    <property type="evidence" value="ECO:0007669"/>
    <property type="project" value="UniProtKB-KW"/>
</dbReference>
<dbReference type="GO" id="GO:0009423">
    <property type="term" value="P:chorismate biosynthetic process"/>
    <property type="evidence" value="ECO:0007669"/>
    <property type="project" value="UniProtKB-UniRule"/>
</dbReference>
<dbReference type="CDD" id="cd00502">
    <property type="entry name" value="DHQase_I"/>
    <property type="match status" value="1"/>
</dbReference>
<dbReference type="FunFam" id="3.20.20.70:FF:000047">
    <property type="entry name" value="3-dehydroquinate dehydratase"/>
    <property type="match status" value="1"/>
</dbReference>
<dbReference type="Gene3D" id="3.20.20.70">
    <property type="entry name" value="Aldolase class I"/>
    <property type="match status" value="1"/>
</dbReference>
<dbReference type="HAMAP" id="MF_00214">
    <property type="entry name" value="AroD"/>
    <property type="match status" value="1"/>
</dbReference>
<dbReference type="InterPro" id="IPR013785">
    <property type="entry name" value="Aldolase_TIM"/>
</dbReference>
<dbReference type="InterPro" id="IPR001381">
    <property type="entry name" value="DHquinase_I"/>
</dbReference>
<dbReference type="InterPro" id="IPR050146">
    <property type="entry name" value="Type-I_3-dehydroquinase"/>
</dbReference>
<dbReference type="NCBIfam" id="TIGR01093">
    <property type="entry name" value="aroD"/>
    <property type="match status" value="1"/>
</dbReference>
<dbReference type="PANTHER" id="PTHR43699">
    <property type="entry name" value="3-DEHYDROQUINATE DEHYDRATASE"/>
    <property type="match status" value="1"/>
</dbReference>
<dbReference type="PANTHER" id="PTHR43699:SF1">
    <property type="entry name" value="3-DEHYDROQUINATE DEHYDRATASE"/>
    <property type="match status" value="1"/>
</dbReference>
<dbReference type="Pfam" id="PF01487">
    <property type="entry name" value="DHquinase_I"/>
    <property type="match status" value="1"/>
</dbReference>
<dbReference type="SUPFAM" id="SSF51569">
    <property type="entry name" value="Aldolase"/>
    <property type="match status" value="1"/>
</dbReference>
<evidence type="ECO:0000255" key="1">
    <source>
        <dbReference type="HAMAP-Rule" id="MF_00214"/>
    </source>
</evidence>
<reference key="1">
    <citation type="journal article" date="2006" name="Proc. Natl. Acad. Sci. U.S.A.">
        <title>Comparative genomics of the lactic acid bacteria.</title>
        <authorList>
            <person name="Makarova K.S."/>
            <person name="Slesarev A."/>
            <person name="Wolf Y.I."/>
            <person name="Sorokin A."/>
            <person name="Mirkin B."/>
            <person name="Koonin E.V."/>
            <person name="Pavlov A."/>
            <person name="Pavlova N."/>
            <person name="Karamychev V."/>
            <person name="Polouchine N."/>
            <person name="Shakhova V."/>
            <person name="Grigoriev I."/>
            <person name="Lou Y."/>
            <person name="Rohksar D."/>
            <person name="Lucas S."/>
            <person name="Huang K."/>
            <person name="Goodstein D.M."/>
            <person name="Hawkins T."/>
            <person name="Plengvidhya V."/>
            <person name="Welker D."/>
            <person name="Hughes J."/>
            <person name="Goh Y."/>
            <person name="Benson A."/>
            <person name="Baldwin K."/>
            <person name="Lee J.-H."/>
            <person name="Diaz-Muniz I."/>
            <person name="Dosti B."/>
            <person name="Smeianov V."/>
            <person name="Wechter W."/>
            <person name="Barabote R."/>
            <person name="Lorca G."/>
            <person name="Altermann E."/>
            <person name="Barrangou R."/>
            <person name="Ganesan B."/>
            <person name="Xie Y."/>
            <person name="Rawsthorne H."/>
            <person name="Tamir D."/>
            <person name="Parker C."/>
            <person name="Breidt F."/>
            <person name="Broadbent J.R."/>
            <person name="Hutkins R."/>
            <person name="O'Sullivan D."/>
            <person name="Steele J."/>
            <person name="Unlu G."/>
            <person name="Saier M.H. Jr."/>
            <person name="Klaenhammer T."/>
            <person name="Richardson P."/>
            <person name="Kozyavkin S."/>
            <person name="Weimer B.C."/>
            <person name="Mills D.A."/>
        </authorList>
    </citation>
    <scope>NUCLEOTIDE SEQUENCE [LARGE SCALE GENOMIC DNA]</scope>
    <source>
        <strain>ATCC BAA-491 / LMD-9</strain>
    </source>
</reference>
<keyword id="KW-0028">Amino-acid biosynthesis</keyword>
<keyword id="KW-0057">Aromatic amino acid biosynthesis</keyword>
<keyword id="KW-0456">Lyase</keyword>
<keyword id="KW-0704">Schiff base</keyword>
<protein>
    <recommendedName>
        <fullName evidence="1">3-dehydroquinate dehydratase</fullName>
        <shortName evidence="1">3-dehydroquinase</shortName>
        <ecNumber evidence="1">4.2.1.10</ecNumber>
    </recommendedName>
    <alternativeName>
        <fullName evidence="1">Type I DHQase</fullName>
    </alternativeName>
    <alternativeName>
        <fullName evidence="1">Type I dehydroquinase</fullName>
        <shortName evidence="1">DHQ1</shortName>
    </alternativeName>
</protein>
<name>AROD_STRTD</name>